<dbReference type="EMBL" id="M37227">
    <property type="protein sequence ID" value="AAA41693.1"/>
    <property type="status" value="ALT_FRAME"/>
    <property type="molecule type" value="mRNA"/>
</dbReference>
<dbReference type="EMBL" id="X13804">
    <property type="protein sequence ID" value="CAA32038.1"/>
    <property type="status" value="ALT_FRAME"/>
    <property type="molecule type" value="mRNA"/>
</dbReference>
<dbReference type="EMBL" id="AF031879">
    <property type="protein sequence ID" value="AAB87068.1"/>
    <property type="molecule type" value="mRNA"/>
</dbReference>
<dbReference type="EMBL" id="M21964">
    <property type="protein sequence ID" value="AAA41695.1"/>
    <property type="molecule type" value="mRNA"/>
</dbReference>
<dbReference type="EMBL" id="J04517">
    <property type="protein sequence ID" value="AAA41692.1"/>
    <property type="molecule type" value="mRNA"/>
</dbReference>
<dbReference type="EMBL" id="AY112897">
    <property type="protein sequence ID" value="AAM49796.1"/>
    <property type="molecule type" value="mRNA"/>
</dbReference>
<dbReference type="PIR" id="A37221">
    <property type="entry name" value="A37221"/>
</dbReference>
<dbReference type="PIR" id="S02003">
    <property type="entry name" value="S02003"/>
</dbReference>
<dbReference type="SMR" id="P16884"/>
<dbReference type="DIP" id="DIP-105N"/>
<dbReference type="FunCoup" id="P16884">
    <property type="interactions" value="2"/>
</dbReference>
<dbReference type="IntAct" id="P16884">
    <property type="interactions" value="5"/>
</dbReference>
<dbReference type="MINT" id="P16884"/>
<dbReference type="STRING" id="10116.ENSRNOP00000011604"/>
<dbReference type="GlyGen" id="P16884">
    <property type="glycosylation" value="3 sites, 1 O-linked glycan (3 sites)"/>
</dbReference>
<dbReference type="iPTMnet" id="P16884"/>
<dbReference type="PhosphoSitePlus" id="P16884"/>
<dbReference type="jPOST" id="P16884"/>
<dbReference type="PaxDb" id="10116-ENSRNOP00000011604"/>
<dbReference type="UCSC" id="RGD:3159">
    <property type="organism name" value="rat"/>
</dbReference>
<dbReference type="AGR" id="RGD:3159"/>
<dbReference type="RGD" id="3159">
    <property type="gene designation" value="Nefh"/>
</dbReference>
<dbReference type="eggNOG" id="ENOG502QYDU">
    <property type="taxonomic scope" value="Eukaryota"/>
</dbReference>
<dbReference type="InParanoid" id="P16884"/>
<dbReference type="PhylomeDB" id="P16884"/>
<dbReference type="PRO" id="PR:P16884"/>
<dbReference type="Proteomes" id="UP000002494">
    <property type="component" value="Unplaced"/>
</dbReference>
<dbReference type="GO" id="GO:0097440">
    <property type="term" value="C:apical dendrite"/>
    <property type="evidence" value="ECO:0000314"/>
    <property type="project" value="RGD"/>
</dbReference>
<dbReference type="GO" id="GO:0030424">
    <property type="term" value="C:axon"/>
    <property type="evidence" value="ECO:0000314"/>
    <property type="project" value="MGI"/>
</dbReference>
<dbReference type="GO" id="GO:0150017">
    <property type="term" value="C:basal proximal dendrite"/>
    <property type="evidence" value="ECO:0000314"/>
    <property type="project" value="RGD"/>
</dbReference>
<dbReference type="GO" id="GO:0005737">
    <property type="term" value="C:cytoplasm"/>
    <property type="evidence" value="ECO:0000314"/>
    <property type="project" value="BHF-UCL"/>
</dbReference>
<dbReference type="GO" id="GO:0005856">
    <property type="term" value="C:cytoskeleton"/>
    <property type="evidence" value="ECO:0000266"/>
    <property type="project" value="RGD"/>
</dbReference>
<dbReference type="GO" id="GO:0005882">
    <property type="term" value="C:intermediate filament"/>
    <property type="evidence" value="ECO:0000314"/>
    <property type="project" value="BHF-UCL"/>
</dbReference>
<dbReference type="GO" id="GO:0097418">
    <property type="term" value="C:neurofibrillary tangle"/>
    <property type="evidence" value="ECO:0000266"/>
    <property type="project" value="RGD"/>
</dbReference>
<dbReference type="GO" id="GO:0005883">
    <property type="term" value="C:neurofilament"/>
    <property type="evidence" value="ECO:0000266"/>
    <property type="project" value="RGD"/>
</dbReference>
<dbReference type="GO" id="GO:0043025">
    <property type="term" value="C:neuronal cell body"/>
    <property type="evidence" value="ECO:0000314"/>
    <property type="project" value="RGD"/>
</dbReference>
<dbReference type="GO" id="GO:0043204">
    <property type="term" value="C:perikaryon"/>
    <property type="evidence" value="ECO:0000314"/>
    <property type="project" value="RGD"/>
</dbReference>
<dbReference type="GO" id="GO:0014069">
    <property type="term" value="C:postsynaptic density"/>
    <property type="evidence" value="ECO:0000266"/>
    <property type="project" value="RGD"/>
</dbReference>
<dbReference type="GO" id="GO:0099160">
    <property type="term" value="C:postsynaptic intermediate filament cytoskeleton"/>
    <property type="evidence" value="ECO:0000266"/>
    <property type="project" value="RGD"/>
</dbReference>
<dbReference type="GO" id="GO:0098685">
    <property type="term" value="C:Schaffer collateral - CA1 synapse"/>
    <property type="evidence" value="ECO:0000266"/>
    <property type="project" value="RGD"/>
</dbReference>
<dbReference type="GO" id="GO:0019901">
    <property type="term" value="F:protein kinase binding"/>
    <property type="evidence" value="ECO:0000266"/>
    <property type="project" value="RGD"/>
</dbReference>
<dbReference type="GO" id="GO:0044877">
    <property type="term" value="F:protein-containing complex binding"/>
    <property type="evidence" value="ECO:0000314"/>
    <property type="project" value="RGD"/>
</dbReference>
<dbReference type="GO" id="GO:0030674">
    <property type="term" value="F:protein-macromolecule adaptor activity"/>
    <property type="evidence" value="ECO:0000314"/>
    <property type="project" value="BHF-UCL"/>
</dbReference>
<dbReference type="GO" id="GO:0005200">
    <property type="term" value="F:structural constituent of cytoskeleton"/>
    <property type="evidence" value="ECO:0000314"/>
    <property type="project" value="BHF-UCL"/>
</dbReference>
<dbReference type="GO" id="GO:0099184">
    <property type="term" value="F:structural constituent of postsynaptic intermediate filament cytoskeleton"/>
    <property type="evidence" value="ECO:0000266"/>
    <property type="project" value="RGD"/>
</dbReference>
<dbReference type="GO" id="GO:0015643">
    <property type="term" value="F:toxic substance binding"/>
    <property type="evidence" value="ECO:0000314"/>
    <property type="project" value="RGD"/>
</dbReference>
<dbReference type="GO" id="GO:0061564">
    <property type="term" value="P:axon development"/>
    <property type="evidence" value="ECO:0000266"/>
    <property type="project" value="RGD"/>
</dbReference>
<dbReference type="GO" id="GO:0031103">
    <property type="term" value="P:axon regeneration"/>
    <property type="evidence" value="ECO:0000314"/>
    <property type="project" value="RGD"/>
</dbReference>
<dbReference type="GO" id="GO:0071392">
    <property type="term" value="P:cellular response to estradiol stimulus"/>
    <property type="evidence" value="ECO:0000270"/>
    <property type="project" value="RGD"/>
</dbReference>
<dbReference type="GO" id="GO:0071447">
    <property type="term" value="P:cellular response to hydroperoxide"/>
    <property type="evidence" value="ECO:0000270"/>
    <property type="project" value="RGD"/>
</dbReference>
<dbReference type="GO" id="GO:1990830">
    <property type="term" value="P:cellular response to leukemia inhibitory factor"/>
    <property type="evidence" value="ECO:0000266"/>
    <property type="project" value="RGD"/>
</dbReference>
<dbReference type="GO" id="GO:0034599">
    <property type="term" value="P:cellular response to oxidative stress"/>
    <property type="evidence" value="ECO:0000270"/>
    <property type="project" value="RGD"/>
</dbReference>
<dbReference type="GO" id="GO:0021987">
    <property type="term" value="P:cerebral cortex development"/>
    <property type="evidence" value="ECO:0000270"/>
    <property type="project" value="RGD"/>
</dbReference>
<dbReference type="GO" id="GO:0021766">
    <property type="term" value="P:hippocampus development"/>
    <property type="evidence" value="ECO:0000270"/>
    <property type="project" value="RGD"/>
</dbReference>
<dbReference type="GO" id="GO:0045110">
    <property type="term" value="P:intermediate filament bundle assembly"/>
    <property type="evidence" value="ECO:0000316"/>
    <property type="project" value="BHF-UCL"/>
</dbReference>
<dbReference type="GO" id="GO:0045104">
    <property type="term" value="P:intermediate filament cytoskeleton organization"/>
    <property type="evidence" value="ECO:0000266"/>
    <property type="project" value="RGD"/>
</dbReference>
<dbReference type="GO" id="GO:0000226">
    <property type="term" value="P:microtubule cytoskeleton organization"/>
    <property type="evidence" value="ECO:0000266"/>
    <property type="project" value="RGD"/>
</dbReference>
<dbReference type="GO" id="GO:0033693">
    <property type="term" value="P:neurofilament bundle assembly"/>
    <property type="evidence" value="ECO:0000266"/>
    <property type="project" value="RGD"/>
</dbReference>
<dbReference type="GO" id="GO:0060052">
    <property type="term" value="P:neurofilament cytoskeleton organization"/>
    <property type="evidence" value="ECO:0000266"/>
    <property type="project" value="RGD"/>
</dbReference>
<dbReference type="GO" id="GO:0031175">
    <property type="term" value="P:neuron projection development"/>
    <property type="evidence" value="ECO:0000270"/>
    <property type="project" value="RGD"/>
</dbReference>
<dbReference type="GO" id="GO:0001552">
    <property type="term" value="P:ovarian follicle atresia"/>
    <property type="evidence" value="ECO:0000314"/>
    <property type="project" value="RGD"/>
</dbReference>
<dbReference type="GO" id="GO:0048936">
    <property type="term" value="P:peripheral nervous system neuron axonogenesis"/>
    <property type="evidence" value="ECO:0000266"/>
    <property type="project" value="RGD"/>
</dbReference>
<dbReference type="GO" id="GO:0099170">
    <property type="term" value="P:postsynaptic modulation of chemical synaptic transmission"/>
    <property type="evidence" value="ECO:0000266"/>
    <property type="project" value="RGD"/>
</dbReference>
<dbReference type="GO" id="GO:1902513">
    <property type="term" value="P:regulation of organelle transport along microtubule"/>
    <property type="evidence" value="ECO:0000266"/>
    <property type="project" value="RGD"/>
</dbReference>
<dbReference type="GO" id="GO:1903937">
    <property type="term" value="P:response to acrylamide"/>
    <property type="evidence" value="ECO:0000270"/>
    <property type="project" value="RGD"/>
</dbReference>
<dbReference type="GO" id="GO:0042220">
    <property type="term" value="P:response to cocaine"/>
    <property type="evidence" value="ECO:0000270"/>
    <property type="project" value="RGD"/>
</dbReference>
<dbReference type="GO" id="GO:1903935">
    <property type="term" value="P:response to sodium arsenite"/>
    <property type="evidence" value="ECO:0000314"/>
    <property type="project" value="RGD"/>
</dbReference>
<dbReference type="GO" id="GO:0021510">
    <property type="term" value="P:spinal cord development"/>
    <property type="evidence" value="ECO:0000270"/>
    <property type="project" value="RGD"/>
</dbReference>
<dbReference type="FunFam" id="1.20.5.170:FF:000002">
    <property type="entry name" value="Type I keratin KA11"/>
    <property type="match status" value="1"/>
</dbReference>
<dbReference type="Gene3D" id="1.20.5.170">
    <property type="match status" value="1"/>
</dbReference>
<dbReference type="Gene3D" id="1.20.5.500">
    <property type="entry name" value="Single helix bin"/>
    <property type="match status" value="1"/>
</dbReference>
<dbReference type="Gene3D" id="1.20.5.1160">
    <property type="entry name" value="Vasodilator-stimulated phosphoprotein"/>
    <property type="match status" value="1"/>
</dbReference>
<dbReference type="InterPro" id="IPR010790">
    <property type="entry name" value="DUF1388"/>
</dbReference>
<dbReference type="InterPro" id="IPR018039">
    <property type="entry name" value="IF_conserved"/>
</dbReference>
<dbReference type="InterPro" id="IPR039008">
    <property type="entry name" value="IF_rod_dom"/>
</dbReference>
<dbReference type="PANTHER" id="PTHR23214:SF1">
    <property type="entry name" value="NEUROFILAMENT HEAVY POLYPEPTIDE"/>
    <property type="match status" value="1"/>
</dbReference>
<dbReference type="PANTHER" id="PTHR23214">
    <property type="entry name" value="NEUROFILAMENT TRIPLET H PROTEIN"/>
    <property type="match status" value="1"/>
</dbReference>
<dbReference type="Pfam" id="PF07142">
    <property type="entry name" value="DUF1388"/>
    <property type="match status" value="18"/>
</dbReference>
<dbReference type="Pfam" id="PF00038">
    <property type="entry name" value="Filament"/>
    <property type="match status" value="1"/>
</dbReference>
<dbReference type="SMART" id="SM01391">
    <property type="entry name" value="Filament"/>
    <property type="match status" value="1"/>
</dbReference>
<dbReference type="SUPFAM" id="SSF64593">
    <property type="entry name" value="Intermediate filament protein, coiled coil region"/>
    <property type="match status" value="2"/>
</dbReference>
<dbReference type="PROSITE" id="PS00226">
    <property type="entry name" value="IF_ROD_1"/>
    <property type="match status" value="1"/>
</dbReference>
<dbReference type="PROSITE" id="PS51842">
    <property type="entry name" value="IF_ROD_2"/>
    <property type="match status" value="1"/>
</dbReference>
<keyword id="KW-0966">Cell projection</keyword>
<keyword id="KW-0175">Coiled coil</keyword>
<keyword id="KW-0963">Cytoplasm</keyword>
<keyword id="KW-0206">Cytoskeleton</keyword>
<keyword id="KW-0903">Direct protein sequencing</keyword>
<keyword id="KW-0403">Intermediate filament</keyword>
<keyword id="KW-0597">Phosphoprotein</keyword>
<keyword id="KW-1185">Reference proteome</keyword>
<keyword id="KW-0677">Repeat</keyword>
<name>NFH_RAT</name>
<sequence>MMSFGSADALLGAPFAPLHGGGSLHYALSRKAGAGGTRSAAGSSSGFHSWARTSVSSVSASPSRFRGAASSTDSLDTLSNGPEGCVAAVAARSEKEQLQALNDRFAGYIDKVRQLEAHNRTLEGEAAALRQQKGRAAMGELYEREVREMRGAVLRLGAARGHVRLEQEHLLEDIAHVRQRLDEEARQREEAEAAARALARFAQEAEAARVELQKKAQALQEECGYLRRHHQEEVGELLGQIQGCGAAQAQAQAEARDALKCDVTSALREIRAQLEGHTVQSTLQSEEWFRVRLDRLSEAAKVNTDAMRSAQEEITEYRRQLQARTTELEALKSTKESLERQRSELEDRHQVDMASYQDAIQQLDNELRNTKWEMAAQLREYQDLLNVKMALDIEIAAYRKLLEGEECRIGFGPSPFSLTEGLPKIPSMSTHIKVKSEEKIKVVEKSEKETVIVEEQTEEIQVTEEVTEEEDKEAQGEEEEEAEEGGEEAATTSPPAEEAASPEKETKSPVKEEAKSPAEAKSPAEAKSPAEAKSPAEVKSPAEVKSPAEAKSPAEAKSPAEVKSPAEVKSPAEAKSPAEAKSPAEVKSPATVKSPGEAKSPAEAKSPAEVKSPVEAKSPAEAKSPASVKSPGEAKSPAEAKSPAEVKSPATVKSPVEAKSPAEVKSPVTVKSPAEAKSPVEVKSPASVKSPSEAKSPAGAKSPAEAKSPVVAKSPAEAKSPAEAKPPAEAKSPAEAKSPAEAKSPAEAKSPAEAKSPVEVKSPEKAKSPVKEGAKSLAEAKSPEKAKSPVKEEIKPPAEVKSPEKAKSPMKEEAKSPEKAKTLDVKSPEAKTPAKEEAKRPADIRSPEQVKSPAKEEAKSPEKEETRTEKVAPKKEEVKSPVEEVKAKEPPKKVEEEKTPATPKTEVKESKKDEAPKEAQKPKAEEKEPLTEKPKDSPGEAKKEEAKEKKAAAPEEETPAKLGVKEEAKPKEKAEDAKAKEPSKPSEKEKPKKEEVPAAPEKKDTKEEKTTESKKPEEKPKMEAKAKEEDKGLPQEPSKPKTEKAEKSSSTDQKDSQPSEKAPEDKAAKGDK</sequence>
<protein>
    <recommendedName>
        <fullName>Neurofilament heavy polypeptide</fullName>
        <shortName>NF-H</shortName>
    </recommendedName>
    <alternativeName>
        <fullName>200 kDa neurofilament protein</fullName>
    </alternativeName>
    <alternativeName>
        <fullName>Neurofilament triplet H protein</fullName>
    </alternativeName>
</protein>
<organism>
    <name type="scientific">Rattus norvegicus</name>
    <name type="common">Rat</name>
    <dbReference type="NCBI Taxonomy" id="10116"/>
    <lineage>
        <taxon>Eukaryota</taxon>
        <taxon>Metazoa</taxon>
        <taxon>Chordata</taxon>
        <taxon>Craniata</taxon>
        <taxon>Vertebrata</taxon>
        <taxon>Euteleostomi</taxon>
        <taxon>Mammalia</taxon>
        <taxon>Eutheria</taxon>
        <taxon>Euarchontoglires</taxon>
        <taxon>Glires</taxon>
        <taxon>Rodentia</taxon>
        <taxon>Myomorpha</taxon>
        <taxon>Muroidea</taxon>
        <taxon>Muridae</taxon>
        <taxon>Murinae</taxon>
        <taxon>Rattus</taxon>
    </lineage>
</organism>
<proteinExistence type="evidence at protein level"/>
<accession>P16884</accession>
<accession>O35482</accession>
<accession>Q540Z7</accession>
<accession>Q63368</accession>
<feature type="chain" id="PRO_0000063803" description="Neurofilament heavy polypeptide">
    <location>
        <begin position="1"/>
        <end position="1072"/>
    </location>
</feature>
<feature type="domain" description="IF rod" evidence="4">
    <location>
        <begin position="94"/>
        <end position="409"/>
    </location>
</feature>
<feature type="repeat" description="1">
    <location>
        <begin position="507"/>
        <end position="512"/>
    </location>
</feature>
<feature type="repeat" description="2">
    <location>
        <begin position="515"/>
        <end position="520"/>
    </location>
</feature>
<feature type="repeat" description="3">
    <location>
        <begin position="521"/>
        <end position="526"/>
    </location>
</feature>
<feature type="repeat" description="4">
    <location>
        <begin position="527"/>
        <end position="532"/>
    </location>
</feature>
<feature type="repeat" description="5">
    <location>
        <begin position="533"/>
        <end position="538"/>
    </location>
</feature>
<feature type="repeat" description="6">
    <location>
        <begin position="539"/>
        <end position="544"/>
    </location>
</feature>
<feature type="repeat" description="7">
    <location>
        <begin position="545"/>
        <end position="550"/>
    </location>
</feature>
<feature type="repeat" description="8">
    <location>
        <begin position="551"/>
        <end position="556"/>
    </location>
</feature>
<feature type="repeat" description="9">
    <location>
        <begin position="557"/>
        <end position="562"/>
    </location>
</feature>
<feature type="repeat" description="10">
    <location>
        <begin position="563"/>
        <end position="568"/>
    </location>
</feature>
<feature type="repeat" description="11">
    <location>
        <begin position="569"/>
        <end position="574"/>
    </location>
</feature>
<feature type="repeat" description="12">
    <location>
        <begin position="575"/>
        <end position="580"/>
    </location>
</feature>
<feature type="repeat" description="13">
    <location>
        <begin position="581"/>
        <end position="586"/>
    </location>
</feature>
<feature type="repeat" description="14">
    <location>
        <begin position="587"/>
        <end position="592"/>
    </location>
</feature>
<feature type="repeat" description="15">
    <location>
        <begin position="593"/>
        <end position="598"/>
    </location>
</feature>
<feature type="repeat" description="16">
    <location>
        <begin position="599"/>
        <end position="604"/>
    </location>
</feature>
<feature type="repeat" description="17">
    <location>
        <begin position="605"/>
        <end position="610"/>
    </location>
</feature>
<feature type="repeat" description="18">
    <location>
        <begin position="611"/>
        <end position="616"/>
    </location>
</feature>
<feature type="repeat" description="19">
    <location>
        <begin position="617"/>
        <end position="622"/>
    </location>
</feature>
<feature type="repeat" description="20">
    <location>
        <begin position="623"/>
        <end position="628"/>
    </location>
</feature>
<feature type="repeat" description="21">
    <location>
        <begin position="629"/>
        <end position="634"/>
    </location>
</feature>
<feature type="repeat" description="22">
    <location>
        <begin position="635"/>
        <end position="640"/>
    </location>
</feature>
<feature type="repeat" description="23">
    <location>
        <begin position="641"/>
        <end position="646"/>
    </location>
</feature>
<feature type="repeat" description="24">
    <location>
        <begin position="647"/>
        <end position="652"/>
    </location>
</feature>
<feature type="repeat" description="25">
    <location>
        <begin position="653"/>
        <end position="658"/>
    </location>
</feature>
<feature type="repeat" description="26">
    <location>
        <begin position="659"/>
        <end position="664"/>
    </location>
</feature>
<feature type="repeat" description="27">
    <location>
        <begin position="665"/>
        <end position="670"/>
    </location>
</feature>
<feature type="repeat" description="28">
    <location>
        <begin position="671"/>
        <end position="676"/>
    </location>
</feature>
<feature type="repeat" description="29">
    <location>
        <begin position="677"/>
        <end position="682"/>
    </location>
</feature>
<feature type="repeat" description="30">
    <location>
        <begin position="683"/>
        <end position="688"/>
    </location>
</feature>
<feature type="repeat" description="31">
    <location>
        <begin position="689"/>
        <end position="694"/>
    </location>
</feature>
<feature type="repeat" description="32">
    <location>
        <begin position="695"/>
        <end position="700"/>
    </location>
</feature>
<feature type="repeat" description="33">
    <location>
        <begin position="701"/>
        <end position="706"/>
    </location>
</feature>
<feature type="repeat" description="34">
    <location>
        <begin position="707"/>
        <end position="712"/>
    </location>
</feature>
<feature type="repeat" description="35">
    <location>
        <begin position="713"/>
        <end position="718"/>
    </location>
</feature>
<feature type="repeat" description="36">
    <location>
        <begin position="719"/>
        <end position="724"/>
    </location>
</feature>
<feature type="repeat" description="37; approximate">
    <location>
        <begin position="725"/>
        <end position="730"/>
    </location>
</feature>
<feature type="repeat" description="38">
    <location>
        <begin position="731"/>
        <end position="736"/>
    </location>
</feature>
<feature type="repeat" description="39">
    <location>
        <begin position="737"/>
        <end position="742"/>
    </location>
</feature>
<feature type="repeat" description="40">
    <location>
        <begin position="743"/>
        <end position="748"/>
    </location>
</feature>
<feature type="repeat" description="41">
    <location>
        <begin position="749"/>
        <end position="754"/>
    </location>
</feature>
<feature type="repeat" description="42">
    <location>
        <begin position="755"/>
        <end position="760"/>
    </location>
</feature>
<feature type="repeat" description="43">
    <location>
        <begin position="761"/>
        <end position="766"/>
    </location>
</feature>
<feature type="repeat" description="44">
    <location>
        <begin position="767"/>
        <end position="772"/>
    </location>
</feature>
<feature type="repeat" description="45; approximate">
    <location>
        <begin position="775"/>
        <end position="780"/>
    </location>
</feature>
<feature type="repeat" description="46">
    <location>
        <begin position="781"/>
        <end position="786"/>
    </location>
</feature>
<feature type="repeat" description="47">
    <location>
        <begin position="787"/>
        <end position="792"/>
    </location>
</feature>
<feature type="repeat" description="48; approximate">
    <location>
        <begin position="795"/>
        <end position="800"/>
    </location>
</feature>
<feature type="repeat" description="49">
    <location>
        <begin position="801"/>
        <end position="806"/>
    </location>
</feature>
<feature type="repeat" description="50">
    <location>
        <begin position="807"/>
        <end position="812"/>
    </location>
</feature>
<feature type="repeat" description="51">
    <location>
        <begin position="815"/>
        <end position="820"/>
    </location>
</feature>
<feature type="repeat" description="52">
    <location>
        <begin position="826"/>
        <end position="831"/>
    </location>
</feature>
<feature type="repeat" description="53">
    <location>
        <begin position="851"/>
        <end position="856"/>
    </location>
</feature>
<feature type="repeat" description="54">
    <location>
        <begin position="859"/>
        <end position="864"/>
    </location>
</feature>
<feature type="repeat" description="55">
    <location>
        <begin position="879"/>
        <end position="884"/>
    </location>
</feature>
<feature type="region of interest" description="55 X 6 AA approximate tandem repeats of K-S-P-[VAGSE]-[KEVTSGA]-[EAVK]">
    <location>
        <begin position="278"/>
        <end position="643"/>
    </location>
</feature>
<feature type="region of interest" description="Disordered" evidence="5">
    <location>
        <begin position="454"/>
        <end position="1072"/>
    </location>
</feature>
<feature type="coiled-coil region" evidence="3">
    <location>
        <begin position="98"/>
        <end position="132"/>
    </location>
</feature>
<feature type="coiled-coil region" evidence="3">
    <location>
        <begin position="174"/>
        <end position="222"/>
    </location>
</feature>
<feature type="coiled-coil region" evidence="3">
    <location>
        <begin position="293"/>
        <end position="380"/>
    </location>
</feature>
<feature type="compositionally biased region" description="Acidic residues" evidence="5">
    <location>
        <begin position="455"/>
        <end position="487"/>
    </location>
</feature>
<feature type="compositionally biased region" description="Low complexity" evidence="5">
    <location>
        <begin position="488"/>
        <end position="499"/>
    </location>
</feature>
<feature type="compositionally biased region" description="Basic and acidic residues" evidence="5">
    <location>
        <begin position="501"/>
        <end position="584"/>
    </location>
</feature>
<feature type="compositionally biased region" description="Basic and acidic residues" evidence="5">
    <location>
        <begin position="600"/>
        <end position="620"/>
    </location>
</feature>
<feature type="compositionally biased region" description="Low complexity" evidence="5">
    <location>
        <begin position="621"/>
        <end position="631"/>
    </location>
</feature>
<feature type="compositionally biased region" description="Basic and acidic residues" evidence="5">
    <location>
        <begin position="720"/>
        <end position="774"/>
    </location>
</feature>
<feature type="compositionally biased region" description="Basic and acidic residues" evidence="5">
    <location>
        <begin position="781"/>
        <end position="953"/>
    </location>
</feature>
<feature type="compositionally biased region" description="Basic and acidic residues" evidence="5">
    <location>
        <begin position="963"/>
        <end position="1072"/>
    </location>
</feature>
<feature type="modified residue" description="Phosphoserine" evidence="2">
    <location>
        <position position="74"/>
    </location>
</feature>
<feature type="modified residue" description="Phosphoserine" evidence="9">
    <location>
        <position position="343"/>
    </location>
</feature>
<feature type="modified residue" description="Phosphoserine" evidence="9">
    <location>
        <position position="414"/>
    </location>
</feature>
<feature type="modified residue" description="Phosphoserine" evidence="9">
    <location>
        <position position="417"/>
    </location>
</feature>
<feature type="modified residue" description="Phosphoserine" evidence="9">
    <location>
        <position position="501"/>
    </location>
</feature>
<feature type="modified residue" description="Phosphoserine" evidence="9">
    <location>
        <position position="516"/>
    </location>
</feature>
<feature type="modified residue" description="Phosphoserine" evidence="9">
    <location>
        <position position="522"/>
    </location>
</feature>
<feature type="modified residue" description="Phosphoserine" evidence="9">
    <location>
        <position position="528"/>
    </location>
</feature>
<feature type="modified residue" description="Phosphoserine" evidence="9">
    <location>
        <position position="534"/>
    </location>
</feature>
<feature type="modified residue" description="Phosphoserine" evidence="9">
    <location>
        <position position="540"/>
    </location>
</feature>
<feature type="modified residue" description="Phosphoserine" evidence="9">
    <location>
        <position position="546"/>
    </location>
</feature>
<feature type="modified residue" description="Phosphoserine" evidence="9">
    <location>
        <position position="552"/>
    </location>
</feature>
<feature type="modified residue" description="Phosphoserine" evidence="9">
    <location>
        <position position="558"/>
    </location>
</feature>
<feature type="modified residue" description="Phosphoserine" evidence="9">
    <location>
        <position position="564"/>
    </location>
</feature>
<feature type="modified residue" description="Phosphoserine" evidence="9">
    <location>
        <position position="570"/>
    </location>
</feature>
<feature type="modified residue" description="Phosphoserine" evidence="9">
    <location>
        <position position="576"/>
    </location>
</feature>
<feature type="modified residue" description="Phosphoserine" evidence="9">
    <location>
        <position position="582"/>
    </location>
</feature>
<feature type="modified residue" description="Phosphoserine" evidence="9">
    <location>
        <position position="588"/>
    </location>
</feature>
<feature type="modified residue" description="Phosphoserine" evidence="9">
    <location>
        <position position="594"/>
    </location>
</feature>
<feature type="modified residue" description="Phosphoserine" evidence="9">
    <location>
        <position position="600"/>
    </location>
</feature>
<feature type="modified residue" description="Phosphoserine" evidence="9">
    <location>
        <position position="606"/>
    </location>
</feature>
<feature type="modified residue" description="Phosphoserine" evidence="2">
    <location>
        <position position="612"/>
    </location>
</feature>
<feature type="modified residue" description="Phosphoserine" evidence="9">
    <location>
        <position position="618"/>
    </location>
</feature>
<feature type="modified residue" description="Phosphoserine" evidence="9">
    <location>
        <position position="624"/>
    </location>
</feature>
<feature type="modified residue" description="Phosphoserine" evidence="9">
    <location>
        <position position="627"/>
    </location>
</feature>
<feature type="modified residue" description="Phosphoserine" evidence="9">
    <location>
        <position position="630"/>
    </location>
</feature>
<feature type="modified residue" description="Phosphoserine" evidence="9">
    <location>
        <position position="636"/>
    </location>
</feature>
<feature type="modified residue" description="Phosphoserine" evidence="9">
    <location>
        <position position="642"/>
    </location>
</feature>
<feature type="modified residue" description="Phosphoserine" evidence="9">
    <location>
        <position position="648"/>
    </location>
</feature>
<feature type="modified residue" description="Phosphoserine" evidence="9">
    <location>
        <position position="654"/>
    </location>
</feature>
<feature type="modified residue" description="Phosphoserine" evidence="9">
    <location>
        <position position="660"/>
    </location>
</feature>
<feature type="modified residue" description="Phosphoserine" evidence="9">
    <location>
        <position position="666"/>
    </location>
</feature>
<feature type="modified residue" description="Phosphoserine" evidence="9">
    <location>
        <position position="672"/>
    </location>
</feature>
<feature type="modified residue" description="Phosphoserine" evidence="2">
    <location>
        <position position="678"/>
    </location>
</feature>
<feature type="modified residue" description="Phosphoserine" evidence="9">
    <location>
        <position position="684"/>
    </location>
</feature>
<feature type="modified residue" description="Phosphoserine" evidence="9">
    <location>
        <position position="687"/>
    </location>
</feature>
<feature type="modified residue" description="Phosphoserine" evidence="9">
    <location>
        <position position="690"/>
    </location>
</feature>
<feature type="modified residue" description="Phosphoserine" evidence="9">
    <location>
        <position position="696"/>
    </location>
</feature>
<feature type="modified residue" description="Phosphoserine" evidence="9">
    <location>
        <position position="702"/>
    </location>
</feature>
<feature type="modified residue" description="Phosphoserine" evidence="9">
    <location>
        <position position="708"/>
    </location>
</feature>
<feature type="modified residue" description="Phosphoserine" evidence="9">
    <location>
        <position position="714"/>
    </location>
</feature>
<feature type="modified residue" description="Phosphoserine" evidence="9">
    <location>
        <position position="720"/>
    </location>
</feature>
<feature type="modified residue" description="Phosphoserine" evidence="9">
    <location>
        <position position="732"/>
    </location>
</feature>
<feature type="modified residue" description="Phosphoserine" evidence="9">
    <location>
        <position position="738"/>
    </location>
</feature>
<feature type="modified residue" description="Phosphoserine" evidence="9">
    <location>
        <position position="744"/>
    </location>
</feature>
<feature type="modified residue" description="Phosphoserine" evidence="9">
    <location>
        <position position="750"/>
    </location>
</feature>
<feature type="modified residue" description="Phosphoserine" evidence="9">
    <location>
        <position position="756"/>
    </location>
</feature>
<feature type="modified residue" description="Phosphoserine" evidence="9">
    <location>
        <position position="762"/>
    </location>
</feature>
<feature type="modified residue" description="Phosphoserine" evidence="2">
    <location>
        <position position="776"/>
    </location>
</feature>
<feature type="modified residue" description="Phosphoserine" evidence="9">
    <location>
        <position position="782"/>
    </location>
</feature>
<feature type="modified residue" description="Phosphoserine" evidence="2">
    <location>
        <position position="788"/>
    </location>
</feature>
<feature type="modified residue" description="Phosphoserine" evidence="9">
    <location>
        <position position="802"/>
    </location>
</feature>
<feature type="modified residue" description="Phosphoserine" evidence="9">
    <location>
        <position position="808"/>
    </location>
</feature>
<feature type="modified residue" description="Phosphoserine" evidence="9">
    <location>
        <position position="816"/>
    </location>
</feature>
<feature type="modified residue" description="Phosphoserine" evidence="9">
    <location>
        <position position="827"/>
    </location>
</feature>
<feature type="modified residue" description="Phosphothreonine" evidence="9">
    <location>
        <position position="832"/>
    </location>
</feature>
<feature type="modified residue" description="Phosphoserine" evidence="9">
    <location>
        <position position="846"/>
    </location>
</feature>
<feature type="modified residue" description="Phosphoserine" evidence="9">
    <location>
        <position position="852"/>
    </location>
</feature>
<feature type="modified residue" description="Phosphoserine" evidence="9">
    <location>
        <position position="860"/>
    </location>
</feature>
<feature type="modified residue" description="Phosphoserine" evidence="9">
    <location>
        <position position="880"/>
    </location>
</feature>
<feature type="modified residue" description="Phosphoserine" evidence="9">
    <location>
        <position position="937"/>
    </location>
</feature>
<feature type="sequence conflict" description="In Ref. 1; AAA41693/CAA32038." evidence="8" ref="1">
    <original>I</original>
    <variation>L</variation>
    <location>
        <position position="393"/>
    </location>
</feature>
<feature type="sequence conflict" description="In Ref. 1; AAA41693/CAA32038." evidence="8" ref="1">
    <original>S</original>
    <variation>I</variation>
    <location>
        <position position="414"/>
    </location>
</feature>
<feature type="sequence conflict" description="In Ref. 4; AAA41695." evidence="8" ref="4">
    <original>L</original>
    <variation>T</variation>
    <location>
        <position position="422"/>
    </location>
</feature>
<feature type="sequence conflict" description="In Ref. 4; AAA41695." evidence="8" ref="4">
    <original>M</original>
    <variation>T</variation>
    <location>
        <position position="428"/>
    </location>
</feature>
<feature type="sequence conflict" description="In Ref. 1 and 4." evidence="8" ref="1 4">
    <original>E</original>
    <variation>V</variation>
    <location>
        <position position="555"/>
    </location>
</feature>
<feature type="sequence conflict" description="In Ref. 2; AAB87068." evidence="8" ref="2">
    <original>E</original>
    <variation>T</variation>
    <location>
        <position position="567"/>
    </location>
</feature>
<feature type="sequence conflict" description="In Ref. 1; AAA41693/CAA32038." evidence="8" ref="1">
    <original>K</original>
    <variation>N</variation>
    <location>
        <position position="587"/>
    </location>
</feature>
<feature type="sequence conflict" description="In Ref. 4 and 7." evidence="8" ref="4 7">
    <original>V</original>
    <variation>A</variation>
    <location>
        <position position="614"/>
    </location>
</feature>
<feature type="sequence conflict" description="In Ref. 1; AAA41693/CAA32038." evidence="8" ref="1">
    <original>E</original>
    <variation>G</variation>
    <location>
        <position position="723"/>
    </location>
</feature>
<feature type="sequence conflict" description="In Ref. 4 and 7." evidence="8" ref="4 7">
    <original>P</original>
    <variation>S</variation>
    <location>
        <position position="726"/>
    </location>
</feature>
<feature type="sequence conflict" description="In Ref. 1; AAA41693/CAA32038." evidence="8" ref="1">
    <original>KE</original>
    <variation>RK</variation>
    <location>
        <begin position="811"/>
        <end position="812"/>
    </location>
</feature>
<feature type="sequence conflict" description="In Ref. 1; AAA41693/CAA32038." evidence="8" ref="1">
    <original>T</original>
    <variation>P</variation>
    <location>
        <position position="832"/>
    </location>
</feature>
<feature type="sequence conflict" description="In Ref. 6; AAA41692." evidence="8" ref="6">
    <original>A</original>
    <variation>V</variation>
    <location>
        <position position="968"/>
    </location>
</feature>
<feature type="sequence conflict" description="In Ref. 6; AAA41692." evidence="8" ref="6">
    <original>AAP</original>
    <variation>GST</variation>
    <location>
        <begin position="998"/>
        <end position="1000"/>
    </location>
</feature>
<feature type="sequence conflict" description="In Ref. 4 and 7." evidence="8" ref="4 7">
    <original>T</original>
    <variation>L</variation>
    <location>
        <position position="1010"/>
    </location>
</feature>
<feature type="sequence conflict" description="In Ref. 1; AAA41693/CAA32038." evidence="8" ref="1">
    <original>P</original>
    <variation>R</variation>
    <location>
        <position position="1016"/>
    </location>
</feature>
<feature type="sequence conflict" description="In Ref. 2; AAB87068." evidence="8" ref="2">
    <original>E</original>
    <variation>Q</variation>
    <location>
        <position position="1023"/>
    </location>
</feature>
<reference key="1">
    <citation type="journal article" date="1988" name="FEBS Lett.">
        <title>Partial sequence of the rat heavy neurofilament polypeptide (NF-H). Identification of putative phosphorylation sites.</title>
        <authorList>
            <person name="Breen K.C."/>
            <person name="Robinson P.A."/>
            <person name="Wion D."/>
            <person name="Anderton B.H."/>
        </authorList>
    </citation>
    <scope>NUCLEOTIDE SEQUENCE [MRNA]</scope>
    <source>
        <tissue>Brain</tissue>
    </source>
</reference>
<reference key="2">
    <citation type="journal article" date="1990" name="J. Neurosci.">
        <title>Transfected rat high-molecular-weight neurofilament (NF-H) coassembles with vimentin in a predominantly nonphosphorylated form.</title>
        <authorList>
            <person name="Chin S.S."/>
            <person name="Liem R.K."/>
        </authorList>
    </citation>
    <scope>NUCLEOTIDE SEQUENCE [MRNA]</scope>
</reference>
<reference key="3">
    <citation type="journal article" date="1986" name="FEBS Lett.">
        <title>Isolation of a cDNA for the rat heavy neurofilament polypeptide (NF-H).</title>
        <authorList>
            <person name="Robinson P.A."/>
            <person name="Wion D."/>
            <person name="Anderton B.H."/>
        </authorList>
    </citation>
    <scope>NUCLEOTIDE SEQUENCE [MRNA] OF 230-318 AND 472-554</scope>
</reference>
<reference key="4">
    <citation type="journal article" date="1988" name="Biochem. Biophys. Res. Commun.">
        <title>The large neurofilament subunit (NF-H) of the rat: cDNA cloning and in situ detection.</title>
        <authorList>
            <person name="Dautigny A."/>
            <person name="Pham-Dinh D."/>
            <person name="Roussel C."/>
            <person name="Felix J.M."/>
            <person name="Nussbaum J.-L."/>
            <person name="Jolles P."/>
        </authorList>
    </citation>
    <scope>NUCLEOTIDE SEQUENCE [MRNA] OF 266-1072</scope>
</reference>
<reference key="5">
    <citation type="submission" date="2007-07" db="UniProtKB">
        <authorList>
            <person name="Lubec G."/>
            <person name="Pradeep J.J.P."/>
            <person name="Afjehi-Sadat L."/>
            <person name="Kang S.U."/>
        </authorList>
    </citation>
    <scope>PROTEIN SEQUENCE OF 39-52; 165-178; 229-256; 272-290; 349-368; 389-399 AND 401-424</scope>
    <scope>IDENTIFICATION BY MASS SPECTROMETRY</scope>
    <source>
        <strain>Sprague-Dawley</strain>
        <tissue>Brain</tissue>
        <tissue>Spinal cord</tissue>
    </source>
</reference>
<reference key="6">
    <citation type="journal article" date="1989" name="Proc. Natl. Acad. Sci. U.S.A.">
        <title>Cloning of a cDNA encoding the rat high molecular weight neurofilament peptide (NF-H): developmental and tissue expression in the rat, and mapping of its human homologue to chromosomes 1 and 22.</title>
        <authorList>
            <person name="Lieberburg I."/>
            <person name="Spinner N."/>
            <person name="Snyder S."/>
            <person name="Anderson J."/>
            <person name="Goldgaber D."/>
            <person name="Smulowitz M."/>
            <person name="Carroll Z."/>
            <person name="Emanuel B.S."/>
            <person name="Breitner J."/>
            <person name="Rubin L."/>
        </authorList>
    </citation>
    <scope>NUCLEOTIDE SEQUENCE [MRNA] OF 559-1072</scope>
</reference>
<reference key="7">
    <citation type="submission" date="2002-05" db="EMBL/GenBank/DDBJ databases">
        <title>Rat heavy neurofilament (NF-H) polypeptide.</title>
        <authorList>
            <person name="Alliel P.M."/>
            <person name="Langlois C."/>
        </authorList>
    </citation>
    <scope>NUCLEOTIDE SEQUENCE [MRNA] OF 559-1072</scope>
    <source>
        <tissue>Brain</tissue>
    </source>
</reference>
<reference key="8">
    <citation type="journal article" date="1997" name="J. Biol. Chem.">
        <title>Heterodimeric associations between neuronal intermediate filament proteins.</title>
        <authorList>
            <person name="Athlan E.S."/>
            <person name="Mushynski W.E."/>
        </authorList>
    </citation>
    <scope>INTERACTION WITH NEFL AND INA</scope>
    <scope>TISSUE SPECIFICITY</scope>
</reference>
<reference key="9">
    <citation type="journal article" date="2012" name="Nat. Commun.">
        <title>Quantitative maps of protein phosphorylation sites across 14 different rat organs and tissues.</title>
        <authorList>
            <person name="Lundby A."/>
            <person name="Secher A."/>
            <person name="Lage K."/>
            <person name="Nordsborg N.B."/>
            <person name="Dmytriyev A."/>
            <person name="Lundby C."/>
            <person name="Olsen J.V."/>
        </authorList>
    </citation>
    <scope>PHOSPHORYLATION [LARGE SCALE ANALYSIS] AT SER-343; SER-414; SER-417; SER-501; SER-516; SER-522; SER-528; SER-534; SER-540; SER-546; SER-552; SER-558; SER-564; SER-570; SER-576; SER-582; SER-588; SER-594; SER-600; SER-606; SER-618; SER-624; SER-627; SER-630; SER-636; SER-642; SER-648; SER-654; SER-660; SER-666; SER-672; SER-684; SER-687; SER-690; SER-696; SER-702; SER-708; SER-714; SER-720; SER-732; SER-738; SER-744; SER-750; SER-756; SER-762; SER-782; SER-802; SER-808; SER-816; SER-827; THR-832; SER-846; SER-852; SER-860; SER-880 AND SER-937</scope>
    <scope>IDENTIFICATION BY MASS SPECTROMETRY [LARGE SCALE ANALYSIS]</scope>
</reference>
<reference key="10">
    <citation type="journal article" date="2010" name="Brain Res.">
        <title>Peripherin and ATF3 genes are differentially regulated in regenerating and non-regenerating primary sensory neurons.</title>
        <authorList>
            <person name="Reid A.J."/>
            <person name="Welin D."/>
            <person name="Wiberg M."/>
            <person name="Terenghi G."/>
            <person name="Novikov L.N."/>
        </authorList>
    </citation>
    <scope>TISSUE SPECIFICITY</scope>
    <scope>INDUCTION</scope>
</reference>
<comment type="function">
    <text evidence="2">Neurofilaments usually contain three intermediate filament proteins: NEFL, NEFM, and NEFH which are involved in the maintenance of neuronal caliber. NEFH has an important function in mature axons that is not subserved by the two smaller NEF proteins. May additionally cooperate with the neuronal intermediate filament proteins PRPH and INA to form neuronal filamentous networks (By similarity).</text>
</comment>
<comment type="subunit">
    <text evidence="7">Forms heterodimers with NEFL; which can further hetero-oligomerize (in vitro) (PubMed:9388258). Forms heterodimers with INA (in vitro) (PubMed:9388258).</text>
</comment>
<comment type="subcellular location">
    <subcellularLocation>
        <location evidence="2">Cytoplasm</location>
        <location evidence="2">Cytoskeleton</location>
    </subcellularLocation>
    <subcellularLocation>
        <location evidence="2">Cell projection</location>
        <location evidence="2">Axon</location>
    </subcellularLocation>
</comment>
<comment type="tissue specificity">
    <text evidence="6 7">Expressed in the dorsal root ganglion neurons (at protein level) (PubMed:9388258). Expressed in cutaneous and muscular sensory neurons (PubMed:19913522).</text>
</comment>
<comment type="induction">
    <text evidence="6">Down-regulated after nerve injury.</text>
</comment>
<comment type="PTM">
    <text>There are a number of repeats of the tripeptide K-S-P, NFH is phosphorylated on a number of the serines in this motif. It is thought that phosphorylation of NFH results in the formation of interfilament cross bridges that are important in the maintenance of axonal caliber.</text>
</comment>
<comment type="PTM">
    <text>Phosphorylation seems to play a major role in the functioning of the larger neurofilament polypeptides (NF-M and NF-H), the levels of phosphorylation being altered developmentally and coincidentally with a change in the neurofilament function.</text>
</comment>
<comment type="PTM">
    <text evidence="1">Phosphorylated in the head and rod regions by the PKC kinase PKN1, leading to the inhibition of polymerization.</text>
</comment>
<comment type="polymorphism">
    <text>The number of repeats in the tandem repeat domain is shown to vary between 53 and 55.</text>
</comment>
<comment type="similarity">
    <text evidence="4">Belongs to the intermediate filament family.</text>
</comment>
<comment type="sequence caution" evidence="8">
    <conflict type="frameshift">
        <sequence resource="EMBL-CDS" id="CAA32038"/>
    </conflict>
</comment>
<gene>
    <name type="primary">Nefh</name>
    <name type="synonym">Nfh</name>
</gene>
<evidence type="ECO:0000250" key="1"/>
<evidence type="ECO:0000250" key="2">
    <source>
        <dbReference type="UniProtKB" id="P19246"/>
    </source>
</evidence>
<evidence type="ECO:0000255" key="3"/>
<evidence type="ECO:0000255" key="4">
    <source>
        <dbReference type="PROSITE-ProRule" id="PRU01188"/>
    </source>
</evidence>
<evidence type="ECO:0000256" key="5">
    <source>
        <dbReference type="SAM" id="MobiDB-lite"/>
    </source>
</evidence>
<evidence type="ECO:0000269" key="6">
    <source>
    </source>
</evidence>
<evidence type="ECO:0000269" key="7">
    <source>
    </source>
</evidence>
<evidence type="ECO:0000305" key="8"/>
<evidence type="ECO:0007744" key="9">
    <source>
    </source>
</evidence>